<keyword id="KW-0004">4Fe-4S</keyword>
<keyword id="KW-0028">Amino-acid biosynthesis</keyword>
<keyword id="KW-0198">Cysteine biosynthesis</keyword>
<keyword id="KW-0349">Heme</keyword>
<keyword id="KW-0408">Iron</keyword>
<keyword id="KW-0411">Iron-sulfur</keyword>
<keyword id="KW-0479">Metal-binding</keyword>
<keyword id="KW-0521">NADP</keyword>
<keyword id="KW-0560">Oxidoreductase</keyword>
<gene>
    <name evidence="1" type="primary">cysI</name>
    <name type="ordered locus">Lferr_2721</name>
</gene>
<organism>
    <name type="scientific">Acidithiobacillus ferrooxidans (strain ATCC 53993 / BNL-5-31)</name>
    <name type="common">Leptospirillum ferrooxidans (ATCC 53993)</name>
    <dbReference type="NCBI Taxonomy" id="380394"/>
    <lineage>
        <taxon>Bacteria</taxon>
        <taxon>Pseudomonadati</taxon>
        <taxon>Pseudomonadota</taxon>
        <taxon>Acidithiobacillia</taxon>
        <taxon>Acidithiobacillales</taxon>
        <taxon>Acidithiobacillaceae</taxon>
        <taxon>Acidithiobacillus</taxon>
    </lineage>
</organism>
<proteinExistence type="inferred from homology"/>
<comment type="function">
    <text evidence="1">Component of the sulfite reductase complex that catalyzes the 6-electron reduction of sulfite to sulfide. This is one of several activities required for the biosynthesis of L-cysteine from sulfate.</text>
</comment>
<comment type="catalytic activity">
    <reaction evidence="1">
        <text>hydrogen sulfide + 3 NADP(+) + 3 H2O = sulfite + 3 NADPH + 4 H(+)</text>
        <dbReference type="Rhea" id="RHEA:13801"/>
        <dbReference type="ChEBI" id="CHEBI:15377"/>
        <dbReference type="ChEBI" id="CHEBI:15378"/>
        <dbReference type="ChEBI" id="CHEBI:17359"/>
        <dbReference type="ChEBI" id="CHEBI:29919"/>
        <dbReference type="ChEBI" id="CHEBI:57783"/>
        <dbReference type="ChEBI" id="CHEBI:58349"/>
        <dbReference type="EC" id="1.8.1.2"/>
    </reaction>
</comment>
<comment type="cofactor">
    <cofactor evidence="1">
        <name>siroheme</name>
        <dbReference type="ChEBI" id="CHEBI:60052"/>
    </cofactor>
    <text evidence="1">Binds 1 siroheme per subunit.</text>
</comment>
<comment type="cofactor">
    <cofactor evidence="1">
        <name>[4Fe-4S] cluster</name>
        <dbReference type="ChEBI" id="CHEBI:49883"/>
    </cofactor>
    <text evidence="1">Binds 1 [4Fe-4S] cluster per subunit.</text>
</comment>
<comment type="pathway">
    <text evidence="1">Sulfur metabolism; hydrogen sulfide biosynthesis; hydrogen sulfide from sulfite (NADPH route): step 1/1.</text>
</comment>
<comment type="subunit">
    <text evidence="1">Alpha(8)-beta(8). The alpha component is a flavoprotein, the beta component is a hemoprotein.</text>
</comment>
<comment type="similarity">
    <text evidence="1">Belongs to the nitrite and sulfite reductase 4Fe-4S domain family.</text>
</comment>
<accession>B5EQW2</accession>
<reference key="1">
    <citation type="submission" date="2008-08" db="EMBL/GenBank/DDBJ databases">
        <title>Complete sequence of Acidithiobacillus ferrooxidans ATCC 53993.</title>
        <authorList>
            <person name="Lucas S."/>
            <person name="Copeland A."/>
            <person name="Lapidus A."/>
            <person name="Glavina del Rio T."/>
            <person name="Dalin E."/>
            <person name="Tice H."/>
            <person name="Bruce D."/>
            <person name="Goodwin L."/>
            <person name="Pitluck S."/>
            <person name="Sims D."/>
            <person name="Brettin T."/>
            <person name="Detter J.C."/>
            <person name="Han C."/>
            <person name="Kuske C.R."/>
            <person name="Larimer F."/>
            <person name="Land M."/>
            <person name="Hauser L."/>
            <person name="Kyrpides N."/>
            <person name="Lykidis A."/>
            <person name="Borole A.P."/>
        </authorList>
    </citation>
    <scope>NUCLEOTIDE SEQUENCE [LARGE SCALE GENOMIC DNA]</scope>
    <source>
        <strain>ATCC 53993 / BNL-5-31</strain>
    </source>
</reference>
<protein>
    <recommendedName>
        <fullName evidence="1">Sulfite reductase [NADPH] hemoprotein beta-component</fullName>
        <shortName evidence="1">SiR-HP</shortName>
        <shortName evidence="1">SiRHP</shortName>
        <ecNumber evidence="1">1.8.1.2</ecNumber>
    </recommendedName>
</protein>
<dbReference type="EC" id="1.8.1.2" evidence="1"/>
<dbReference type="EMBL" id="CP001132">
    <property type="protein sequence ID" value="ACH84913.1"/>
    <property type="molecule type" value="Genomic_DNA"/>
</dbReference>
<dbReference type="RefSeq" id="WP_009566801.1">
    <property type="nucleotide sequence ID" value="NC_011206.1"/>
</dbReference>
<dbReference type="SMR" id="B5EQW2"/>
<dbReference type="KEGG" id="afe:Lferr_2721"/>
<dbReference type="eggNOG" id="COG0155">
    <property type="taxonomic scope" value="Bacteria"/>
</dbReference>
<dbReference type="HOGENOM" id="CLU_001975_3_2_6"/>
<dbReference type="UniPathway" id="UPA00140">
    <property type="reaction ID" value="UER00207"/>
</dbReference>
<dbReference type="GO" id="GO:0009337">
    <property type="term" value="C:sulfite reductase complex (NADPH)"/>
    <property type="evidence" value="ECO:0007669"/>
    <property type="project" value="InterPro"/>
</dbReference>
<dbReference type="GO" id="GO:0051539">
    <property type="term" value="F:4 iron, 4 sulfur cluster binding"/>
    <property type="evidence" value="ECO:0007669"/>
    <property type="project" value="UniProtKB-KW"/>
</dbReference>
<dbReference type="GO" id="GO:0020037">
    <property type="term" value="F:heme binding"/>
    <property type="evidence" value="ECO:0007669"/>
    <property type="project" value="InterPro"/>
</dbReference>
<dbReference type="GO" id="GO:0046872">
    <property type="term" value="F:metal ion binding"/>
    <property type="evidence" value="ECO:0007669"/>
    <property type="project" value="UniProtKB-KW"/>
</dbReference>
<dbReference type="GO" id="GO:0050661">
    <property type="term" value="F:NADP binding"/>
    <property type="evidence" value="ECO:0007669"/>
    <property type="project" value="InterPro"/>
</dbReference>
<dbReference type="GO" id="GO:0050311">
    <property type="term" value="F:sulfite reductase (ferredoxin) activity"/>
    <property type="evidence" value="ECO:0007669"/>
    <property type="project" value="TreeGrafter"/>
</dbReference>
<dbReference type="GO" id="GO:0004783">
    <property type="term" value="F:sulfite reductase (NADPH) activity"/>
    <property type="evidence" value="ECO:0007669"/>
    <property type="project" value="UniProtKB-UniRule"/>
</dbReference>
<dbReference type="GO" id="GO:0019344">
    <property type="term" value="P:cysteine biosynthetic process"/>
    <property type="evidence" value="ECO:0007669"/>
    <property type="project" value="UniProtKB-KW"/>
</dbReference>
<dbReference type="GO" id="GO:0070814">
    <property type="term" value="P:hydrogen sulfide biosynthetic process"/>
    <property type="evidence" value="ECO:0007669"/>
    <property type="project" value="UniProtKB-UniRule"/>
</dbReference>
<dbReference type="GO" id="GO:0000103">
    <property type="term" value="P:sulfate assimilation"/>
    <property type="evidence" value="ECO:0007669"/>
    <property type="project" value="UniProtKB-UniRule"/>
</dbReference>
<dbReference type="FunFam" id="3.30.413.10:FF:000003">
    <property type="entry name" value="Sulfite reductase [NADPH] hemoprotein beta-component"/>
    <property type="match status" value="1"/>
</dbReference>
<dbReference type="Gene3D" id="3.30.413.10">
    <property type="entry name" value="Sulfite Reductase Hemoprotein, domain 1"/>
    <property type="match status" value="2"/>
</dbReference>
<dbReference type="HAMAP" id="MF_01540">
    <property type="entry name" value="CysI"/>
    <property type="match status" value="1"/>
</dbReference>
<dbReference type="InterPro" id="IPR011786">
    <property type="entry name" value="CysI"/>
</dbReference>
<dbReference type="InterPro" id="IPR005117">
    <property type="entry name" value="NiRdtase/SiRdtase_haem-b_fer"/>
</dbReference>
<dbReference type="InterPro" id="IPR036136">
    <property type="entry name" value="Nit/Sulf_reduc_fer-like_dom_sf"/>
</dbReference>
<dbReference type="InterPro" id="IPR006067">
    <property type="entry name" value="NO2/SO3_Rdtase_4Fe4S_dom"/>
</dbReference>
<dbReference type="InterPro" id="IPR045169">
    <property type="entry name" value="NO2/SO3_Rdtase_4Fe4S_prot"/>
</dbReference>
<dbReference type="InterPro" id="IPR045854">
    <property type="entry name" value="NO2/SO3_Rdtase_4Fe4S_sf"/>
</dbReference>
<dbReference type="InterPro" id="IPR006066">
    <property type="entry name" value="NO2/SO3_Rdtase_FeS/sirohaem_BS"/>
</dbReference>
<dbReference type="NCBIfam" id="NF010029">
    <property type="entry name" value="PRK13504.1"/>
    <property type="match status" value="1"/>
</dbReference>
<dbReference type="PANTHER" id="PTHR11493:SF47">
    <property type="entry name" value="SULFITE REDUCTASE [NADPH] SUBUNIT BETA"/>
    <property type="match status" value="1"/>
</dbReference>
<dbReference type="PANTHER" id="PTHR11493">
    <property type="entry name" value="SULFITE REDUCTASE [NADPH] SUBUNIT BETA-RELATED"/>
    <property type="match status" value="1"/>
</dbReference>
<dbReference type="Pfam" id="PF01077">
    <property type="entry name" value="NIR_SIR"/>
    <property type="match status" value="1"/>
</dbReference>
<dbReference type="Pfam" id="PF03460">
    <property type="entry name" value="NIR_SIR_ferr"/>
    <property type="match status" value="2"/>
</dbReference>
<dbReference type="PRINTS" id="PR00397">
    <property type="entry name" value="SIROHAEM"/>
</dbReference>
<dbReference type="SUPFAM" id="SSF56014">
    <property type="entry name" value="Nitrite and sulphite reductase 4Fe-4S domain-like"/>
    <property type="match status" value="2"/>
</dbReference>
<dbReference type="SUPFAM" id="SSF55124">
    <property type="entry name" value="Nitrite/Sulfite reductase N-terminal domain-like"/>
    <property type="match status" value="2"/>
</dbReference>
<dbReference type="PROSITE" id="PS00365">
    <property type="entry name" value="NIR_SIR"/>
    <property type="match status" value="1"/>
</dbReference>
<sequence>MSINDKALSDVERIKAESQGLRGTLRESLHNPVTGALAEDDVQVIKFHGIYQQDYRDLRAERHQQKLEPLYQFMARLRLPGGVLSGAQWLALGDIARTYGNASLRITSRQSIQFHGLLKPHLRPVLQALDRALLDTVSACGDVNRNVIASSAPQISAFHAEAYGWAQKIAEHLLPQSHAYHEIWLGGQQITAPEEDLLYGSTYLPRKFKIAIAVPPHNDVDVLTQDLGFIAIHEEGRLAGFNVCVGGGLGRSHNKPDTYSRLADVCGFCAPGQVLAIAEAVLITQRDHGDRSNRSHARLKYTVDRMGLDRFMEEVQQRTGFSLAPPRPFHFETSGDRFGWLENDDGTACLTLFIPGGRVADGDIPLLSGLDALARLHHGEIRLTCNQNLLIAGISPAERPVVETVLAEYGLNRLLNLAPVRAHAMACVALPTCPLAMAEAERYLPVFLDRIEALLAEVGLEGEALTVRMTGCPNGCARPYLAEIGLVGKAPGLYDLYLGGDRTGMRLNALYREALDEEALLDALRPLLKRFAGQRWAGETFGDFVRRQDLLPPDPGLPHTGRR</sequence>
<evidence type="ECO:0000255" key="1">
    <source>
        <dbReference type="HAMAP-Rule" id="MF_01540"/>
    </source>
</evidence>
<feature type="chain" id="PRO_0000388471" description="Sulfite reductase [NADPH] hemoprotein beta-component">
    <location>
        <begin position="1"/>
        <end position="563"/>
    </location>
</feature>
<feature type="binding site" evidence="1">
    <location>
        <position position="427"/>
    </location>
    <ligand>
        <name>[4Fe-4S] cluster</name>
        <dbReference type="ChEBI" id="CHEBI:49883"/>
    </ligand>
</feature>
<feature type="binding site" evidence="1">
    <location>
        <position position="433"/>
    </location>
    <ligand>
        <name>[4Fe-4S] cluster</name>
        <dbReference type="ChEBI" id="CHEBI:49883"/>
    </ligand>
</feature>
<feature type="binding site" evidence="1">
    <location>
        <position position="472"/>
    </location>
    <ligand>
        <name>[4Fe-4S] cluster</name>
        <dbReference type="ChEBI" id="CHEBI:49883"/>
    </ligand>
</feature>
<feature type="binding site" evidence="1">
    <location>
        <position position="476"/>
    </location>
    <ligand>
        <name>[4Fe-4S] cluster</name>
        <dbReference type="ChEBI" id="CHEBI:49883"/>
    </ligand>
</feature>
<feature type="binding site" description="axial binding residue" evidence="1">
    <location>
        <position position="476"/>
    </location>
    <ligand>
        <name>siroheme</name>
        <dbReference type="ChEBI" id="CHEBI:60052"/>
    </ligand>
    <ligandPart>
        <name>Fe</name>
        <dbReference type="ChEBI" id="CHEBI:18248"/>
    </ligandPart>
</feature>
<name>CYSI_ACIF5</name>